<sequence length="213" mass="23738">MKALKIALTKGRLEKDAVALLEKAGIDCSSMTDKKRKLIFHSSTQPISFILVKAVDVMTYVKHGVADIGIVGKDVLMEASKSHYEMLDLEIGKCQFCLASTPDFDPSSYRRKIIATKYPTVASKFFREKGEDVEIIKIEGSVEIAPVLGLADAIIDIVETGSTLKENGLLIYEKMYPISARLIVNKASLKQNKTQIFQLIDQLEQAIKEERIE</sequence>
<accession>B8DA57</accession>
<comment type="function">
    <text evidence="1">Catalyzes the condensation of ATP and 5-phosphoribose 1-diphosphate to form N'-(5'-phosphoribosyl)-ATP (PR-ATP). Has a crucial role in the pathway because the rate of histidine biosynthesis seems to be controlled primarily by regulation of HisG enzymatic activity.</text>
</comment>
<comment type="catalytic activity">
    <reaction evidence="1">
        <text>1-(5-phospho-beta-D-ribosyl)-ATP + diphosphate = 5-phospho-alpha-D-ribose 1-diphosphate + ATP</text>
        <dbReference type="Rhea" id="RHEA:18473"/>
        <dbReference type="ChEBI" id="CHEBI:30616"/>
        <dbReference type="ChEBI" id="CHEBI:33019"/>
        <dbReference type="ChEBI" id="CHEBI:58017"/>
        <dbReference type="ChEBI" id="CHEBI:73183"/>
        <dbReference type="EC" id="2.4.2.17"/>
    </reaction>
</comment>
<comment type="pathway">
    <text evidence="1">Amino-acid biosynthesis; L-histidine biosynthesis; L-histidine from 5-phospho-alpha-D-ribose 1-diphosphate: step 1/9.</text>
</comment>
<comment type="subunit">
    <text evidence="1">Heteromultimer composed of HisG and HisZ subunits.</text>
</comment>
<comment type="subcellular location">
    <subcellularLocation>
        <location evidence="1">Cytoplasm</location>
    </subcellularLocation>
</comment>
<comment type="domain">
    <text>Lacks the C-terminal regulatory region which is replaced by HisZ.</text>
</comment>
<comment type="similarity">
    <text evidence="1">Belongs to the ATP phosphoribosyltransferase family. Short subfamily.</text>
</comment>
<dbReference type="EC" id="2.4.2.17" evidence="1"/>
<dbReference type="EMBL" id="CP001175">
    <property type="protein sequence ID" value="ACK40402.1"/>
    <property type="molecule type" value="Genomic_DNA"/>
</dbReference>
<dbReference type="RefSeq" id="WP_003729309.1">
    <property type="nucleotide sequence ID" value="NC_011660.1"/>
</dbReference>
<dbReference type="SMR" id="B8DA57"/>
<dbReference type="KEGG" id="lmh:LMHCC_2063"/>
<dbReference type="HOGENOM" id="CLU_038115_2_0_9"/>
<dbReference type="UniPathway" id="UPA00031">
    <property type="reaction ID" value="UER00006"/>
</dbReference>
<dbReference type="GO" id="GO:0005737">
    <property type="term" value="C:cytoplasm"/>
    <property type="evidence" value="ECO:0007669"/>
    <property type="project" value="UniProtKB-SubCell"/>
</dbReference>
<dbReference type="GO" id="GO:0005524">
    <property type="term" value="F:ATP binding"/>
    <property type="evidence" value="ECO:0007669"/>
    <property type="project" value="UniProtKB-KW"/>
</dbReference>
<dbReference type="GO" id="GO:0003879">
    <property type="term" value="F:ATP phosphoribosyltransferase activity"/>
    <property type="evidence" value="ECO:0007669"/>
    <property type="project" value="UniProtKB-UniRule"/>
</dbReference>
<dbReference type="GO" id="GO:0000105">
    <property type="term" value="P:L-histidine biosynthetic process"/>
    <property type="evidence" value="ECO:0007669"/>
    <property type="project" value="UniProtKB-UniRule"/>
</dbReference>
<dbReference type="CDD" id="cd13595">
    <property type="entry name" value="PBP2_HisGs"/>
    <property type="match status" value="1"/>
</dbReference>
<dbReference type="FunFam" id="3.40.190.10:FF:000008">
    <property type="entry name" value="ATP phosphoribosyltransferase"/>
    <property type="match status" value="1"/>
</dbReference>
<dbReference type="FunFam" id="3.40.190.10:FF:000011">
    <property type="entry name" value="ATP phosphoribosyltransferase"/>
    <property type="match status" value="1"/>
</dbReference>
<dbReference type="Gene3D" id="3.40.190.10">
    <property type="entry name" value="Periplasmic binding protein-like II"/>
    <property type="match status" value="2"/>
</dbReference>
<dbReference type="HAMAP" id="MF_01018">
    <property type="entry name" value="HisG_Short"/>
    <property type="match status" value="1"/>
</dbReference>
<dbReference type="InterPro" id="IPR013820">
    <property type="entry name" value="ATP_PRibTrfase_cat"/>
</dbReference>
<dbReference type="InterPro" id="IPR018198">
    <property type="entry name" value="ATP_PRibTrfase_CS"/>
</dbReference>
<dbReference type="InterPro" id="IPR001348">
    <property type="entry name" value="ATP_PRibTrfase_HisG"/>
</dbReference>
<dbReference type="InterPro" id="IPR024893">
    <property type="entry name" value="ATP_PRibTrfase_HisG_short"/>
</dbReference>
<dbReference type="NCBIfam" id="TIGR00070">
    <property type="entry name" value="hisG"/>
    <property type="match status" value="1"/>
</dbReference>
<dbReference type="PANTHER" id="PTHR21403:SF8">
    <property type="entry name" value="ATP PHOSPHORIBOSYLTRANSFERASE"/>
    <property type="match status" value="1"/>
</dbReference>
<dbReference type="PANTHER" id="PTHR21403">
    <property type="entry name" value="ATP PHOSPHORIBOSYLTRANSFERASE ATP-PRTASE"/>
    <property type="match status" value="1"/>
</dbReference>
<dbReference type="Pfam" id="PF01634">
    <property type="entry name" value="HisG"/>
    <property type="match status" value="1"/>
</dbReference>
<dbReference type="SUPFAM" id="SSF53850">
    <property type="entry name" value="Periplasmic binding protein-like II"/>
    <property type="match status" value="1"/>
</dbReference>
<dbReference type="PROSITE" id="PS01316">
    <property type="entry name" value="ATP_P_PHORIBOSYLTR"/>
    <property type="match status" value="1"/>
</dbReference>
<proteinExistence type="inferred from homology"/>
<keyword id="KW-0028">Amino-acid biosynthesis</keyword>
<keyword id="KW-0067">ATP-binding</keyword>
<keyword id="KW-0963">Cytoplasm</keyword>
<keyword id="KW-0328">Glycosyltransferase</keyword>
<keyword id="KW-0368">Histidine biosynthesis</keyword>
<keyword id="KW-0547">Nucleotide-binding</keyword>
<keyword id="KW-0808">Transferase</keyword>
<protein>
    <recommendedName>
        <fullName evidence="1">ATP phosphoribosyltransferase</fullName>
        <shortName evidence="1">ATP-PRT</shortName>
        <shortName evidence="1">ATP-PRTase</shortName>
        <ecNumber evidence="1">2.4.2.17</ecNumber>
    </recommendedName>
</protein>
<reference key="1">
    <citation type="journal article" date="2011" name="J. Bacteriol.">
        <title>Genome sequence of lineage III Listeria monocytogenes strain HCC23.</title>
        <authorList>
            <person name="Steele C.L."/>
            <person name="Donaldson J.R."/>
            <person name="Paul D."/>
            <person name="Banes M.M."/>
            <person name="Arick T."/>
            <person name="Bridges S.M."/>
            <person name="Lawrence M.L."/>
        </authorList>
    </citation>
    <scope>NUCLEOTIDE SEQUENCE [LARGE SCALE GENOMIC DNA]</scope>
    <source>
        <strain>HCC23</strain>
    </source>
</reference>
<feature type="chain" id="PRO_1000213273" description="ATP phosphoribosyltransferase">
    <location>
        <begin position="1"/>
        <end position="213"/>
    </location>
</feature>
<gene>
    <name evidence="1" type="primary">hisG</name>
    <name type="ordered locus">LMHCC_2063</name>
</gene>
<evidence type="ECO:0000255" key="1">
    <source>
        <dbReference type="HAMAP-Rule" id="MF_01018"/>
    </source>
</evidence>
<name>HIS1_LISMH</name>
<organism>
    <name type="scientific">Listeria monocytogenes serotype 4a (strain HCC23)</name>
    <dbReference type="NCBI Taxonomy" id="552536"/>
    <lineage>
        <taxon>Bacteria</taxon>
        <taxon>Bacillati</taxon>
        <taxon>Bacillota</taxon>
        <taxon>Bacilli</taxon>
        <taxon>Bacillales</taxon>
        <taxon>Listeriaceae</taxon>
        <taxon>Listeria</taxon>
    </lineage>
</organism>